<accession>P39549</accession>
<accession>D6VPN1</accession>
<proteinExistence type="inferred from homology"/>
<dbReference type="EMBL" id="L28920">
    <property type="protein sequence ID" value="AAC09491.1"/>
    <property type="molecule type" value="Genomic_DNA"/>
</dbReference>
<dbReference type="EMBL" id="AY692710">
    <property type="protein sequence ID" value="AAT92729.1"/>
    <property type="molecule type" value="Genomic_DNA"/>
</dbReference>
<dbReference type="EMBL" id="BK006935">
    <property type="protein sequence ID" value="DAA07001.1"/>
    <property type="molecule type" value="Genomic_DNA"/>
</dbReference>
<dbReference type="PIR" id="S53481">
    <property type="entry name" value="S53481"/>
</dbReference>
<dbReference type="RefSeq" id="NP_009416.1">
    <property type="nucleotide sequence ID" value="NM_001178223.1"/>
</dbReference>
<dbReference type="BioGRID" id="31808">
    <property type="interactions" value="379"/>
</dbReference>
<dbReference type="FunCoup" id="P39549">
    <property type="interactions" value="37"/>
</dbReference>
<dbReference type="STRING" id="4932.YAR029W"/>
<dbReference type="iPTMnet" id="P39549"/>
<dbReference type="PaxDb" id="4932-YAR029W"/>
<dbReference type="EnsemblFungi" id="YAR029W_mRNA">
    <property type="protein sequence ID" value="YAR029W"/>
    <property type="gene ID" value="YAR029W"/>
</dbReference>
<dbReference type="GeneID" id="851281"/>
<dbReference type="KEGG" id="sce:YAR029W"/>
<dbReference type="AGR" id="SGD:S000000077"/>
<dbReference type="SGD" id="S000000077">
    <property type="gene designation" value="DFP2"/>
</dbReference>
<dbReference type="VEuPathDB" id="FungiDB:YAR029W"/>
<dbReference type="GeneTree" id="ENSGT00940000176285"/>
<dbReference type="HOGENOM" id="CLU_081384_2_1_1"/>
<dbReference type="InParanoid" id="P39549"/>
<dbReference type="OrthoDB" id="10268355at2759"/>
<dbReference type="BioCyc" id="YEAST:G3O-28880-MONOMER"/>
<dbReference type="BioGRID-ORCS" id="851281">
    <property type="hits" value="0 hits in 10 CRISPR screens"/>
</dbReference>
<dbReference type="PRO" id="PR:P39549"/>
<dbReference type="Proteomes" id="UP000002311">
    <property type="component" value="Chromosome I"/>
</dbReference>
<dbReference type="RNAct" id="P39549">
    <property type="molecule type" value="protein"/>
</dbReference>
<dbReference type="GO" id="GO:0005737">
    <property type="term" value="C:cytoplasm"/>
    <property type="evidence" value="ECO:0000315"/>
    <property type="project" value="SGD"/>
</dbReference>
<dbReference type="GO" id="GO:0016020">
    <property type="term" value="C:membrane"/>
    <property type="evidence" value="ECO:0007669"/>
    <property type="project" value="UniProtKB-SubCell"/>
</dbReference>
<dbReference type="InterPro" id="IPR001142">
    <property type="entry name" value="DUP/COS"/>
</dbReference>
<dbReference type="Pfam" id="PF00674">
    <property type="entry name" value="DUP"/>
    <property type="match status" value="1"/>
</dbReference>
<comment type="subcellular location">
    <subcellularLocation>
        <location evidence="1">Cytoplasm</location>
    </subcellularLocation>
    <subcellularLocation>
        <location evidence="1">Membrane</location>
        <topology evidence="1">Peripheral membrane protein</topology>
    </subcellularLocation>
    <text>Punctate pattern.</text>
</comment>
<comment type="disruption phenotype">
    <text evidence="1">Cells lacking all 10 proteins of the DUP240 multigene family show no obvious alterations in mating, sporulation and cell growth.</text>
</comment>
<comment type="similarity">
    <text evidence="2">Belongs to the DUP/COS family.</text>
</comment>
<name>YAJ9_YEAST</name>
<evidence type="ECO:0000269" key="1">
    <source>
    </source>
</evidence>
<evidence type="ECO:0000305" key="2"/>
<evidence type="ECO:0000312" key="3">
    <source>
        <dbReference type="SGD" id="S000000077"/>
    </source>
</evidence>
<protein>
    <recommendedName>
        <fullName evidence="2">DUP240 protein DFP2</fullName>
    </recommendedName>
    <alternativeName>
        <fullName evidence="3">DUP240 family protein 2</fullName>
    </alternativeName>
</protein>
<organism>
    <name type="scientific">Saccharomyces cerevisiae (strain ATCC 204508 / S288c)</name>
    <name type="common">Baker's yeast</name>
    <dbReference type="NCBI Taxonomy" id="559292"/>
    <lineage>
        <taxon>Eukaryota</taxon>
        <taxon>Fungi</taxon>
        <taxon>Dikarya</taxon>
        <taxon>Ascomycota</taxon>
        <taxon>Saccharomycotina</taxon>
        <taxon>Saccharomycetes</taxon>
        <taxon>Saccharomycetales</taxon>
        <taxon>Saccharomycetaceae</taxon>
        <taxon>Saccharomyces</taxon>
    </lineage>
</organism>
<feature type="chain" id="PRO_0000207530" description="DUP240 protein DFP2">
    <location>
        <begin position="1"/>
        <end position="74"/>
    </location>
</feature>
<gene>
    <name evidence="3" type="primary">DFP2</name>
    <name evidence="3" type="ordered locus">YAR029W</name>
    <name type="ORF">FUN57</name>
</gene>
<sequence>MNKYLFDHKIWSTPYYFYCEEDCHRLFLSFIEGRTFEKPTSNAEENVQETEAGESFTLNPGEDFQNCFPRQRIL</sequence>
<reference key="1">
    <citation type="submission" date="1994-02" db="EMBL/GenBank/DDBJ databases">
        <title>Sequencing of chromosome I of Saccharomyces cerevisiae: analysis of the 52 Kbp CDC15-FLO1-PHO11-YAR074 region.</title>
        <authorList>
            <person name="Bussey H."/>
            <person name="Keng T."/>
            <person name="Storms R.K."/>
            <person name="Vo D."/>
            <person name="Zhong W."/>
            <person name="Fortin N."/>
            <person name="Barton A.B."/>
            <person name="Kaback D.B."/>
            <person name="Clark M.W."/>
        </authorList>
    </citation>
    <scope>NUCLEOTIDE SEQUENCE [GENOMIC DNA]</scope>
    <source>
        <strain>ATCC 204511 / S288c / AB972</strain>
    </source>
</reference>
<reference key="2">
    <citation type="journal article" date="1995" name="Proc. Natl. Acad. Sci. U.S.A.">
        <title>The nucleotide sequence of chromosome I from Saccharomyces cerevisiae.</title>
        <authorList>
            <person name="Bussey H."/>
            <person name="Kaback D.B."/>
            <person name="Zhong W.-W."/>
            <person name="Vo D.H."/>
            <person name="Clark M.W."/>
            <person name="Fortin N."/>
            <person name="Hall J."/>
            <person name="Ouellette B.F.F."/>
            <person name="Keng T."/>
            <person name="Barton A.B."/>
            <person name="Su Y."/>
            <person name="Davies C.J."/>
            <person name="Storms R.K."/>
        </authorList>
    </citation>
    <scope>NUCLEOTIDE SEQUENCE [LARGE SCALE GENOMIC DNA]</scope>
    <source>
        <strain>ATCC 204508 / S288c</strain>
    </source>
</reference>
<reference key="3">
    <citation type="journal article" date="2014" name="G3 (Bethesda)">
        <title>The reference genome sequence of Saccharomyces cerevisiae: Then and now.</title>
        <authorList>
            <person name="Engel S.R."/>
            <person name="Dietrich F.S."/>
            <person name="Fisk D.G."/>
            <person name="Binkley G."/>
            <person name="Balakrishnan R."/>
            <person name="Costanzo M.C."/>
            <person name="Dwight S.S."/>
            <person name="Hitz B.C."/>
            <person name="Karra K."/>
            <person name="Nash R.S."/>
            <person name="Weng S."/>
            <person name="Wong E.D."/>
            <person name="Lloyd P."/>
            <person name="Skrzypek M.S."/>
            <person name="Miyasato S.R."/>
            <person name="Simison M."/>
            <person name="Cherry J.M."/>
        </authorList>
    </citation>
    <scope>GENOME REANNOTATION</scope>
    <source>
        <strain>ATCC 204508 / S288c</strain>
    </source>
</reference>
<reference key="4">
    <citation type="journal article" date="2007" name="Genome Res.">
        <title>Approaching a complete repository of sequence-verified protein-encoding clones for Saccharomyces cerevisiae.</title>
        <authorList>
            <person name="Hu Y."/>
            <person name="Rolfs A."/>
            <person name="Bhullar B."/>
            <person name="Murthy T.V.S."/>
            <person name="Zhu C."/>
            <person name="Berger M.F."/>
            <person name="Camargo A.A."/>
            <person name="Kelley F."/>
            <person name="McCarron S."/>
            <person name="Jepson D."/>
            <person name="Richardson A."/>
            <person name="Raphael J."/>
            <person name="Moreira D."/>
            <person name="Taycher E."/>
            <person name="Zuo D."/>
            <person name="Mohr S."/>
            <person name="Kane M.F."/>
            <person name="Williamson J."/>
            <person name="Simpson A.J.G."/>
            <person name="Bulyk M.L."/>
            <person name="Harlow E."/>
            <person name="Marsischky G."/>
            <person name="Kolodner R.D."/>
            <person name="LaBaer J."/>
        </authorList>
    </citation>
    <scope>NUCLEOTIDE SEQUENCE [GENOMIC DNA]</scope>
    <source>
        <strain>ATCC 204508 / S288c</strain>
    </source>
</reference>
<reference key="5">
    <citation type="journal article" date="2002" name="Microbiology">
        <title>Functional analysis of the Saccharomyces cerevisiae DUP240 multigene family reveals membrane-associated proteins that are not essential for cell viability.</title>
        <authorList>
            <person name="Poirey R."/>
            <person name="Despons L."/>
            <person name="Leh V."/>
            <person name="Lafuente M.-J."/>
            <person name="Potier S."/>
            <person name="Souciet J.-L."/>
            <person name="Jauniaux J.-C."/>
        </authorList>
    </citation>
    <scope>SUBCELLULAR LOCATION</scope>
    <scope>DISRUPTION PHENOTYPE</scope>
</reference>
<keyword id="KW-0963">Cytoplasm</keyword>
<keyword id="KW-0472">Membrane</keyword>
<keyword id="KW-1185">Reference proteome</keyword>